<feature type="chain" id="PRO_0000187804" description="Peptidyl-tRNA hydrolase">
    <location>
        <begin position="1"/>
        <end position="185"/>
    </location>
</feature>
<feature type="active site" description="Proton acceptor" evidence="1">
    <location>
        <position position="19"/>
    </location>
</feature>
<feature type="binding site" evidence="1">
    <location>
        <position position="14"/>
    </location>
    <ligand>
        <name>tRNA</name>
        <dbReference type="ChEBI" id="CHEBI:17843"/>
    </ligand>
</feature>
<feature type="binding site" evidence="1">
    <location>
        <position position="65"/>
    </location>
    <ligand>
        <name>tRNA</name>
        <dbReference type="ChEBI" id="CHEBI:17843"/>
    </ligand>
</feature>
<feature type="binding site" evidence="1">
    <location>
        <position position="67"/>
    </location>
    <ligand>
        <name>tRNA</name>
        <dbReference type="ChEBI" id="CHEBI:17843"/>
    </ligand>
</feature>
<feature type="binding site" evidence="1">
    <location>
        <position position="113"/>
    </location>
    <ligand>
        <name>tRNA</name>
        <dbReference type="ChEBI" id="CHEBI:17843"/>
    </ligand>
</feature>
<feature type="site" description="Discriminates between blocked and unblocked aminoacyl-tRNA" evidence="1">
    <location>
        <position position="9"/>
    </location>
</feature>
<feature type="site" description="Stabilizes the basic form of H active site to accept a proton" evidence="1">
    <location>
        <position position="92"/>
    </location>
</feature>
<proteinExistence type="inferred from homology"/>
<dbReference type="EC" id="3.1.1.29" evidence="1"/>
<dbReference type="EMBL" id="AE006914">
    <property type="protein sequence ID" value="AAL03469.1"/>
    <property type="molecule type" value="Genomic_DNA"/>
</dbReference>
<dbReference type="PIR" id="C97816">
    <property type="entry name" value="C97816"/>
</dbReference>
<dbReference type="RefSeq" id="WP_010977530.1">
    <property type="nucleotide sequence ID" value="NC_003103.1"/>
</dbReference>
<dbReference type="SMR" id="Q92H41"/>
<dbReference type="GeneID" id="927751"/>
<dbReference type="KEGG" id="rco:RC0931"/>
<dbReference type="PATRIC" id="fig|272944.4.peg.1061"/>
<dbReference type="HOGENOM" id="CLU_062456_2_2_5"/>
<dbReference type="Proteomes" id="UP000000816">
    <property type="component" value="Chromosome"/>
</dbReference>
<dbReference type="GO" id="GO:0005737">
    <property type="term" value="C:cytoplasm"/>
    <property type="evidence" value="ECO:0007669"/>
    <property type="project" value="UniProtKB-SubCell"/>
</dbReference>
<dbReference type="GO" id="GO:0004045">
    <property type="term" value="F:peptidyl-tRNA hydrolase activity"/>
    <property type="evidence" value="ECO:0007669"/>
    <property type="project" value="UniProtKB-UniRule"/>
</dbReference>
<dbReference type="GO" id="GO:0000049">
    <property type="term" value="F:tRNA binding"/>
    <property type="evidence" value="ECO:0007669"/>
    <property type="project" value="UniProtKB-UniRule"/>
</dbReference>
<dbReference type="GO" id="GO:0006515">
    <property type="term" value="P:protein quality control for misfolded or incompletely synthesized proteins"/>
    <property type="evidence" value="ECO:0007669"/>
    <property type="project" value="UniProtKB-UniRule"/>
</dbReference>
<dbReference type="GO" id="GO:0072344">
    <property type="term" value="P:rescue of stalled ribosome"/>
    <property type="evidence" value="ECO:0007669"/>
    <property type="project" value="UniProtKB-UniRule"/>
</dbReference>
<dbReference type="CDD" id="cd00462">
    <property type="entry name" value="PTH"/>
    <property type="match status" value="1"/>
</dbReference>
<dbReference type="FunFam" id="3.40.50.1470:FF:000001">
    <property type="entry name" value="Peptidyl-tRNA hydrolase"/>
    <property type="match status" value="1"/>
</dbReference>
<dbReference type="Gene3D" id="3.40.50.1470">
    <property type="entry name" value="Peptidyl-tRNA hydrolase"/>
    <property type="match status" value="1"/>
</dbReference>
<dbReference type="HAMAP" id="MF_00083">
    <property type="entry name" value="Pept_tRNA_hydro_bact"/>
    <property type="match status" value="1"/>
</dbReference>
<dbReference type="InterPro" id="IPR001328">
    <property type="entry name" value="Pept_tRNA_hydro"/>
</dbReference>
<dbReference type="InterPro" id="IPR018171">
    <property type="entry name" value="Pept_tRNA_hydro_CS"/>
</dbReference>
<dbReference type="InterPro" id="IPR036416">
    <property type="entry name" value="Pept_tRNA_hydro_sf"/>
</dbReference>
<dbReference type="NCBIfam" id="TIGR00447">
    <property type="entry name" value="pth"/>
    <property type="match status" value="1"/>
</dbReference>
<dbReference type="PANTHER" id="PTHR17224">
    <property type="entry name" value="PEPTIDYL-TRNA HYDROLASE"/>
    <property type="match status" value="1"/>
</dbReference>
<dbReference type="PANTHER" id="PTHR17224:SF1">
    <property type="entry name" value="PEPTIDYL-TRNA HYDROLASE"/>
    <property type="match status" value="1"/>
</dbReference>
<dbReference type="Pfam" id="PF01195">
    <property type="entry name" value="Pept_tRNA_hydro"/>
    <property type="match status" value="1"/>
</dbReference>
<dbReference type="SUPFAM" id="SSF53178">
    <property type="entry name" value="Peptidyl-tRNA hydrolase-like"/>
    <property type="match status" value="1"/>
</dbReference>
<dbReference type="PROSITE" id="PS01195">
    <property type="entry name" value="PEPT_TRNA_HYDROL_1"/>
    <property type="match status" value="1"/>
</dbReference>
<dbReference type="PROSITE" id="PS01196">
    <property type="entry name" value="PEPT_TRNA_HYDROL_2"/>
    <property type="match status" value="1"/>
</dbReference>
<name>PTH_RICCN</name>
<sequence>MLLVIGLGNPGKEYQYTRHNVGFIAIEKIVNQYNSSFSTKKKFNCEIAETISDGQKIIFIKPTTYMNLSGKSVISVKTYYNIYPAKIFVIHDDIDLETGRIKFKTGGGNGGHNGLKSIDGVIGNNYNRIRIGVGRPQNNQGVADYVLNHFSKPEYETVMQAIDRITSNFGLILENKLEEFKNKIA</sequence>
<evidence type="ECO:0000255" key="1">
    <source>
        <dbReference type="HAMAP-Rule" id="MF_00083"/>
    </source>
</evidence>
<protein>
    <recommendedName>
        <fullName evidence="1">Peptidyl-tRNA hydrolase</fullName>
        <shortName evidence="1">Pth</shortName>
        <ecNumber evidence="1">3.1.1.29</ecNumber>
    </recommendedName>
</protein>
<organism>
    <name type="scientific">Rickettsia conorii (strain ATCC VR-613 / Malish 7)</name>
    <dbReference type="NCBI Taxonomy" id="272944"/>
    <lineage>
        <taxon>Bacteria</taxon>
        <taxon>Pseudomonadati</taxon>
        <taxon>Pseudomonadota</taxon>
        <taxon>Alphaproteobacteria</taxon>
        <taxon>Rickettsiales</taxon>
        <taxon>Rickettsiaceae</taxon>
        <taxon>Rickettsieae</taxon>
        <taxon>Rickettsia</taxon>
        <taxon>spotted fever group</taxon>
    </lineage>
</organism>
<gene>
    <name evidence="1" type="primary">pth</name>
    <name type="ordered locus">RC0931</name>
</gene>
<comment type="function">
    <text evidence="1">Hydrolyzes ribosome-free peptidyl-tRNAs (with 1 or more amino acids incorporated), which drop off the ribosome during protein synthesis, or as a result of ribosome stalling.</text>
</comment>
<comment type="function">
    <text evidence="1">Catalyzes the release of premature peptidyl moieties from peptidyl-tRNA molecules trapped in stalled 50S ribosomal subunits, and thus maintains levels of free tRNAs and 50S ribosomes.</text>
</comment>
<comment type="catalytic activity">
    <reaction evidence="1">
        <text>an N-acyl-L-alpha-aminoacyl-tRNA + H2O = an N-acyl-L-amino acid + a tRNA + H(+)</text>
        <dbReference type="Rhea" id="RHEA:54448"/>
        <dbReference type="Rhea" id="RHEA-COMP:10123"/>
        <dbReference type="Rhea" id="RHEA-COMP:13883"/>
        <dbReference type="ChEBI" id="CHEBI:15377"/>
        <dbReference type="ChEBI" id="CHEBI:15378"/>
        <dbReference type="ChEBI" id="CHEBI:59874"/>
        <dbReference type="ChEBI" id="CHEBI:78442"/>
        <dbReference type="ChEBI" id="CHEBI:138191"/>
        <dbReference type="EC" id="3.1.1.29"/>
    </reaction>
</comment>
<comment type="subunit">
    <text evidence="1">Monomer.</text>
</comment>
<comment type="subcellular location">
    <subcellularLocation>
        <location evidence="1">Cytoplasm</location>
    </subcellularLocation>
</comment>
<comment type="similarity">
    <text evidence="1">Belongs to the PTH family.</text>
</comment>
<reference key="1">
    <citation type="journal article" date="2001" name="Science">
        <title>Mechanisms of evolution in Rickettsia conorii and R. prowazekii.</title>
        <authorList>
            <person name="Ogata H."/>
            <person name="Audic S."/>
            <person name="Renesto-Audiffren P."/>
            <person name="Fournier P.-E."/>
            <person name="Barbe V."/>
            <person name="Samson D."/>
            <person name="Roux V."/>
            <person name="Cossart P."/>
            <person name="Weissenbach J."/>
            <person name="Claverie J.-M."/>
            <person name="Raoult D."/>
        </authorList>
    </citation>
    <scope>NUCLEOTIDE SEQUENCE [LARGE SCALE GENOMIC DNA]</scope>
    <source>
        <strain>ATCC VR-613 / Malish 7</strain>
    </source>
</reference>
<accession>Q92H41</accession>
<keyword id="KW-0963">Cytoplasm</keyword>
<keyword id="KW-0378">Hydrolase</keyword>
<keyword id="KW-0694">RNA-binding</keyword>
<keyword id="KW-0820">tRNA-binding</keyword>